<protein>
    <recommendedName>
        <fullName evidence="1">Protease HtpX</fullName>
        <ecNumber evidence="1">3.4.24.-</ecNumber>
    </recommendedName>
    <alternativeName>
        <fullName evidence="1">Heat shock protein HtpX</fullName>
    </alternativeName>
</protein>
<dbReference type="EC" id="3.4.24.-" evidence="1"/>
<dbReference type="EMBL" id="CP001113">
    <property type="protein sequence ID" value="ACF62581.1"/>
    <property type="molecule type" value="Genomic_DNA"/>
</dbReference>
<dbReference type="RefSeq" id="WP_000984498.1">
    <property type="nucleotide sequence ID" value="NZ_CCMR01000003.1"/>
</dbReference>
<dbReference type="SMR" id="B4SV83"/>
<dbReference type="MEROPS" id="M48.002"/>
<dbReference type="GeneID" id="66756319"/>
<dbReference type="KEGG" id="see:SNSL254_A1983"/>
<dbReference type="HOGENOM" id="CLU_042266_1_0_6"/>
<dbReference type="Proteomes" id="UP000008824">
    <property type="component" value="Chromosome"/>
</dbReference>
<dbReference type="GO" id="GO:0005886">
    <property type="term" value="C:plasma membrane"/>
    <property type="evidence" value="ECO:0007669"/>
    <property type="project" value="UniProtKB-SubCell"/>
</dbReference>
<dbReference type="GO" id="GO:0004222">
    <property type="term" value="F:metalloendopeptidase activity"/>
    <property type="evidence" value="ECO:0007669"/>
    <property type="project" value="UniProtKB-UniRule"/>
</dbReference>
<dbReference type="GO" id="GO:0008270">
    <property type="term" value="F:zinc ion binding"/>
    <property type="evidence" value="ECO:0007669"/>
    <property type="project" value="UniProtKB-UniRule"/>
</dbReference>
<dbReference type="GO" id="GO:0006508">
    <property type="term" value="P:proteolysis"/>
    <property type="evidence" value="ECO:0007669"/>
    <property type="project" value="UniProtKB-KW"/>
</dbReference>
<dbReference type="CDD" id="cd07335">
    <property type="entry name" value="M48B_HtpX_like"/>
    <property type="match status" value="1"/>
</dbReference>
<dbReference type="FunFam" id="3.30.2010.10:FF:000001">
    <property type="entry name" value="Protease HtpX"/>
    <property type="match status" value="1"/>
</dbReference>
<dbReference type="Gene3D" id="3.30.2010.10">
    <property type="entry name" value="Metalloproteases ('zincins'), catalytic domain"/>
    <property type="match status" value="1"/>
</dbReference>
<dbReference type="HAMAP" id="MF_00188">
    <property type="entry name" value="Pept_M48_protease_HtpX"/>
    <property type="match status" value="1"/>
</dbReference>
<dbReference type="InterPro" id="IPR050083">
    <property type="entry name" value="HtpX_protease"/>
</dbReference>
<dbReference type="InterPro" id="IPR022919">
    <property type="entry name" value="Pept_M48_protease_HtpX"/>
</dbReference>
<dbReference type="InterPro" id="IPR001915">
    <property type="entry name" value="Peptidase_M48"/>
</dbReference>
<dbReference type="NCBIfam" id="NF003965">
    <property type="entry name" value="PRK05457.1"/>
    <property type="match status" value="1"/>
</dbReference>
<dbReference type="PANTHER" id="PTHR43221">
    <property type="entry name" value="PROTEASE HTPX"/>
    <property type="match status" value="1"/>
</dbReference>
<dbReference type="PANTHER" id="PTHR43221:SF1">
    <property type="entry name" value="PROTEASE HTPX"/>
    <property type="match status" value="1"/>
</dbReference>
<dbReference type="Pfam" id="PF01435">
    <property type="entry name" value="Peptidase_M48"/>
    <property type="match status" value="1"/>
</dbReference>
<keyword id="KW-0997">Cell inner membrane</keyword>
<keyword id="KW-1003">Cell membrane</keyword>
<keyword id="KW-0378">Hydrolase</keyword>
<keyword id="KW-0472">Membrane</keyword>
<keyword id="KW-0479">Metal-binding</keyword>
<keyword id="KW-0482">Metalloprotease</keyword>
<keyword id="KW-0645">Protease</keyword>
<keyword id="KW-0812">Transmembrane</keyword>
<keyword id="KW-1133">Transmembrane helix</keyword>
<keyword id="KW-0862">Zinc</keyword>
<sequence length="293" mass="31879">MMRIALFLLTNLAVMVVFGLVLSLTGIQSSSVQGLLIMALLFGFGGSFISLLMSKWMALKSVGGEVIEQPRNERERWLMNTVATQARQAGIAMPQVAIYHAPDINAFATGARRDASLVAVSTGLLQNMSPDEAEAVIAHEISHIANGDMVTMTLIQGVVNTFVIFISRIIAQIAAGFLGGNRDEGEGSNGNPLIYFAVATVLELVFGILASIITMWFSRYREFHADAGSAKLVGREKMIAALQRLKTSYEPQEATSMMAFCINGKSKSLSELFMTHPPLDKRIEALRSGEYLK</sequence>
<gene>
    <name evidence="1" type="primary">htpX</name>
    <name type="ordered locus">SNSL254_A1983</name>
</gene>
<proteinExistence type="inferred from homology"/>
<evidence type="ECO:0000255" key="1">
    <source>
        <dbReference type="HAMAP-Rule" id="MF_00188"/>
    </source>
</evidence>
<feature type="chain" id="PRO_1000098844" description="Protease HtpX">
    <location>
        <begin position="1"/>
        <end position="293"/>
    </location>
</feature>
<feature type="transmembrane region" description="Helical" evidence="1">
    <location>
        <begin position="4"/>
        <end position="24"/>
    </location>
</feature>
<feature type="transmembrane region" description="Helical" evidence="1">
    <location>
        <begin position="34"/>
        <end position="54"/>
    </location>
</feature>
<feature type="transmembrane region" description="Helical" evidence="1">
    <location>
        <begin position="158"/>
        <end position="178"/>
    </location>
</feature>
<feature type="transmembrane region" description="Helical" evidence="1">
    <location>
        <begin position="193"/>
        <end position="213"/>
    </location>
</feature>
<feature type="active site" evidence="1">
    <location>
        <position position="140"/>
    </location>
</feature>
<feature type="binding site" evidence="1">
    <location>
        <position position="139"/>
    </location>
    <ligand>
        <name>Zn(2+)</name>
        <dbReference type="ChEBI" id="CHEBI:29105"/>
        <note>catalytic</note>
    </ligand>
</feature>
<feature type="binding site" evidence="1">
    <location>
        <position position="143"/>
    </location>
    <ligand>
        <name>Zn(2+)</name>
        <dbReference type="ChEBI" id="CHEBI:29105"/>
        <note>catalytic</note>
    </ligand>
</feature>
<feature type="binding site" evidence="1">
    <location>
        <position position="222"/>
    </location>
    <ligand>
        <name>Zn(2+)</name>
        <dbReference type="ChEBI" id="CHEBI:29105"/>
        <note>catalytic</note>
    </ligand>
</feature>
<accession>B4SV83</accession>
<comment type="cofactor">
    <cofactor evidence="1">
        <name>Zn(2+)</name>
        <dbReference type="ChEBI" id="CHEBI:29105"/>
    </cofactor>
    <text evidence="1">Binds 1 zinc ion per subunit.</text>
</comment>
<comment type="subcellular location">
    <subcellularLocation>
        <location evidence="1">Cell inner membrane</location>
        <topology evidence="1">Multi-pass membrane protein</topology>
    </subcellularLocation>
</comment>
<comment type="similarity">
    <text evidence="1">Belongs to the peptidase M48B family.</text>
</comment>
<organism>
    <name type="scientific">Salmonella newport (strain SL254)</name>
    <dbReference type="NCBI Taxonomy" id="423368"/>
    <lineage>
        <taxon>Bacteria</taxon>
        <taxon>Pseudomonadati</taxon>
        <taxon>Pseudomonadota</taxon>
        <taxon>Gammaproteobacteria</taxon>
        <taxon>Enterobacterales</taxon>
        <taxon>Enterobacteriaceae</taxon>
        <taxon>Salmonella</taxon>
    </lineage>
</organism>
<name>HTPX_SALNS</name>
<reference key="1">
    <citation type="journal article" date="2011" name="J. Bacteriol.">
        <title>Comparative genomics of 28 Salmonella enterica isolates: evidence for CRISPR-mediated adaptive sublineage evolution.</title>
        <authorList>
            <person name="Fricke W.F."/>
            <person name="Mammel M.K."/>
            <person name="McDermott P.F."/>
            <person name="Tartera C."/>
            <person name="White D.G."/>
            <person name="Leclerc J.E."/>
            <person name="Ravel J."/>
            <person name="Cebula T.A."/>
        </authorList>
    </citation>
    <scope>NUCLEOTIDE SEQUENCE [LARGE SCALE GENOMIC DNA]</scope>
    <source>
        <strain>SL254</strain>
    </source>
</reference>